<proteinExistence type="inferred from homology"/>
<keyword id="KW-0067">ATP-binding</keyword>
<keyword id="KW-0418">Kinase</keyword>
<keyword id="KW-0441">Lipid A biosynthesis</keyword>
<keyword id="KW-0444">Lipid biosynthesis</keyword>
<keyword id="KW-0443">Lipid metabolism</keyword>
<keyword id="KW-0547">Nucleotide-binding</keyword>
<keyword id="KW-1185">Reference proteome</keyword>
<keyword id="KW-0808">Transferase</keyword>
<comment type="function">
    <text evidence="1">Transfers the gamma-phosphate of ATP to the 4'-position of a tetraacyldisaccharide 1-phosphate intermediate (termed DS-1-P) to form tetraacyldisaccharide 1,4'-bis-phosphate (lipid IVA).</text>
</comment>
<comment type="catalytic activity">
    <reaction evidence="1">
        <text>a lipid A disaccharide + ATP = a lipid IVA + ADP + H(+)</text>
        <dbReference type="Rhea" id="RHEA:67840"/>
        <dbReference type="ChEBI" id="CHEBI:15378"/>
        <dbReference type="ChEBI" id="CHEBI:30616"/>
        <dbReference type="ChEBI" id="CHEBI:176343"/>
        <dbReference type="ChEBI" id="CHEBI:176425"/>
        <dbReference type="ChEBI" id="CHEBI:456216"/>
        <dbReference type="EC" id="2.7.1.130"/>
    </reaction>
</comment>
<comment type="pathway">
    <text evidence="1">Glycolipid biosynthesis; lipid IV(A) biosynthesis; lipid IV(A) from (3R)-3-hydroxytetradecanoyl-[acyl-carrier-protein] and UDP-N-acetyl-alpha-D-glucosamine: step 6/6.</text>
</comment>
<comment type="similarity">
    <text evidence="1">Belongs to the LpxK family.</text>
</comment>
<protein>
    <recommendedName>
        <fullName evidence="1">Tetraacyldisaccharide 4'-kinase</fullName>
        <ecNumber evidence="1">2.7.1.130</ecNumber>
    </recommendedName>
    <alternativeName>
        <fullName evidence="1">Lipid A 4'-kinase</fullName>
    </alternativeName>
</protein>
<evidence type="ECO:0000255" key="1">
    <source>
        <dbReference type="HAMAP-Rule" id="MF_00409"/>
    </source>
</evidence>
<gene>
    <name evidence="1" type="primary">lpxK</name>
    <name type="ordered locus">XCC2119</name>
</gene>
<dbReference type="EC" id="2.7.1.130" evidence="1"/>
<dbReference type="EMBL" id="AE008922">
    <property type="protein sequence ID" value="AAM41404.1"/>
    <property type="molecule type" value="Genomic_DNA"/>
</dbReference>
<dbReference type="RefSeq" id="NP_637480.1">
    <property type="nucleotide sequence ID" value="NC_003902.1"/>
</dbReference>
<dbReference type="RefSeq" id="WP_011037270.1">
    <property type="nucleotide sequence ID" value="NC_003902.1"/>
</dbReference>
<dbReference type="SMR" id="Q8P8W5"/>
<dbReference type="STRING" id="190485.XCC2119"/>
<dbReference type="EnsemblBacteria" id="AAM41404">
    <property type="protein sequence ID" value="AAM41404"/>
    <property type="gene ID" value="XCC2119"/>
</dbReference>
<dbReference type="KEGG" id="xcc:XCC2119"/>
<dbReference type="PATRIC" id="fig|190485.4.peg.2269"/>
<dbReference type="eggNOG" id="COG1663">
    <property type="taxonomic scope" value="Bacteria"/>
</dbReference>
<dbReference type="HOGENOM" id="CLU_038816_2_0_6"/>
<dbReference type="OrthoDB" id="9766423at2"/>
<dbReference type="UniPathway" id="UPA00359">
    <property type="reaction ID" value="UER00482"/>
</dbReference>
<dbReference type="Proteomes" id="UP000001010">
    <property type="component" value="Chromosome"/>
</dbReference>
<dbReference type="GO" id="GO:0005886">
    <property type="term" value="C:plasma membrane"/>
    <property type="evidence" value="ECO:0000318"/>
    <property type="project" value="GO_Central"/>
</dbReference>
<dbReference type="GO" id="GO:0005524">
    <property type="term" value="F:ATP binding"/>
    <property type="evidence" value="ECO:0007669"/>
    <property type="project" value="UniProtKB-UniRule"/>
</dbReference>
<dbReference type="GO" id="GO:0009029">
    <property type="term" value="F:tetraacyldisaccharide 4'-kinase activity"/>
    <property type="evidence" value="ECO:0000318"/>
    <property type="project" value="GO_Central"/>
</dbReference>
<dbReference type="GO" id="GO:0009245">
    <property type="term" value="P:lipid A biosynthetic process"/>
    <property type="evidence" value="ECO:0000318"/>
    <property type="project" value="GO_Central"/>
</dbReference>
<dbReference type="GO" id="GO:0009244">
    <property type="term" value="P:lipopolysaccharide core region biosynthetic process"/>
    <property type="evidence" value="ECO:0000318"/>
    <property type="project" value="GO_Central"/>
</dbReference>
<dbReference type="HAMAP" id="MF_00409">
    <property type="entry name" value="LpxK"/>
    <property type="match status" value="1"/>
</dbReference>
<dbReference type="InterPro" id="IPR003758">
    <property type="entry name" value="LpxK"/>
</dbReference>
<dbReference type="InterPro" id="IPR027417">
    <property type="entry name" value="P-loop_NTPase"/>
</dbReference>
<dbReference type="NCBIfam" id="TIGR00682">
    <property type="entry name" value="lpxK"/>
    <property type="match status" value="1"/>
</dbReference>
<dbReference type="PANTHER" id="PTHR42724">
    <property type="entry name" value="TETRAACYLDISACCHARIDE 4'-KINASE"/>
    <property type="match status" value="1"/>
</dbReference>
<dbReference type="PANTHER" id="PTHR42724:SF1">
    <property type="entry name" value="TETRAACYLDISACCHARIDE 4'-KINASE, MITOCHONDRIAL-RELATED"/>
    <property type="match status" value="1"/>
</dbReference>
<dbReference type="Pfam" id="PF02606">
    <property type="entry name" value="LpxK"/>
    <property type="match status" value="1"/>
</dbReference>
<dbReference type="SUPFAM" id="SSF52540">
    <property type="entry name" value="P-loop containing nucleoside triphosphate hydrolases"/>
    <property type="match status" value="1"/>
</dbReference>
<accession>Q8P8W5</accession>
<reference key="1">
    <citation type="journal article" date="2002" name="Nature">
        <title>Comparison of the genomes of two Xanthomonas pathogens with differing host specificities.</title>
        <authorList>
            <person name="da Silva A.C.R."/>
            <person name="Ferro J.A."/>
            <person name="Reinach F.C."/>
            <person name="Farah C.S."/>
            <person name="Furlan L.R."/>
            <person name="Quaggio R.B."/>
            <person name="Monteiro-Vitorello C.B."/>
            <person name="Van Sluys M.A."/>
            <person name="Almeida N.F. Jr."/>
            <person name="Alves L.M.C."/>
            <person name="do Amaral A.M."/>
            <person name="Bertolini M.C."/>
            <person name="Camargo L.E.A."/>
            <person name="Camarotte G."/>
            <person name="Cannavan F."/>
            <person name="Cardozo J."/>
            <person name="Chambergo F."/>
            <person name="Ciapina L.P."/>
            <person name="Cicarelli R.M.B."/>
            <person name="Coutinho L.L."/>
            <person name="Cursino-Santos J.R."/>
            <person name="El-Dorry H."/>
            <person name="Faria J.B."/>
            <person name="Ferreira A.J.S."/>
            <person name="Ferreira R.C.C."/>
            <person name="Ferro M.I.T."/>
            <person name="Formighieri E.F."/>
            <person name="Franco M.C."/>
            <person name="Greggio C.C."/>
            <person name="Gruber A."/>
            <person name="Katsuyama A.M."/>
            <person name="Kishi L.T."/>
            <person name="Leite R.P."/>
            <person name="Lemos E.G.M."/>
            <person name="Lemos M.V.F."/>
            <person name="Locali E.C."/>
            <person name="Machado M.A."/>
            <person name="Madeira A.M.B.N."/>
            <person name="Martinez-Rossi N.M."/>
            <person name="Martins E.C."/>
            <person name="Meidanis J."/>
            <person name="Menck C.F.M."/>
            <person name="Miyaki C.Y."/>
            <person name="Moon D.H."/>
            <person name="Moreira L.M."/>
            <person name="Novo M.T.M."/>
            <person name="Okura V.K."/>
            <person name="Oliveira M.C."/>
            <person name="Oliveira V.R."/>
            <person name="Pereira H.A."/>
            <person name="Rossi A."/>
            <person name="Sena J.A.D."/>
            <person name="Silva C."/>
            <person name="de Souza R.F."/>
            <person name="Spinola L.A.F."/>
            <person name="Takita M.A."/>
            <person name="Tamura R.E."/>
            <person name="Teixeira E.C."/>
            <person name="Tezza R.I.D."/>
            <person name="Trindade dos Santos M."/>
            <person name="Truffi D."/>
            <person name="Tsai S.M."/>
            <person name="White F.F."/>
            <person name="Setubal J.C."/>
            <person name="Kitajima J.P."/>
        </authorList>
    </citation>
    <scope>NUCLEOTIDE SEQUENCE [LARGE SCALE GENOMIC DNA]</scope>
    <source>
        <strain>ATCC 33913 / DSM 3586 / NCPPB 528 / LMG 568 / P 25</strain>
    </source>
</reference>
<sequence length="351" mass="38210">MSKRGARTPGYWYDNTPIPLPARMLAPVYGAVTAVRRSLYRRGWLKRHGVPVPVVVIGNVTAGGTGKTPLTITLVSRLQQAGWTPGVASRGYGRDDAGTARWVDADTPVALGGDEPVLIAWKTGARVRVDTDRLAAARALVEAGCDIIVCDDGLQHYRLARDVEIEVVDGQRRYGNGRMLPAGPLREPAARARECDFRVVNLGQGSDAVIPVVGTPVADTDAGFGEWQMRLSIDSVQPMDGKRARPLASLAGQRVHAVAGIAHPERFFAMLRARGIGVVPHAFPDHHVYRAQDFSFGSRLPVLMTEKDAVKCRPFADEWLYSVPLKAELPAAFWVSLLDRLDKLASRHSDA</sequence>
<name>LPXK_XANCP</name>
<feature type="chain" id="PRO_0000190959" description="Tetraacyldisaccharide 4'-kinase">
    <location>
        <begin position="1"/>
        <end position="351"/>
    </location>
</feature>
<feature type="binding site" evidence="1">
    <location>
        <begin position="61"/>
        <end position="68"/>
    </location>
    <ligand>
        <name>ATP</name>
        <dbReference type="ChEBI" id="CHEBI:30616"/>
    </ligand>
</feature>
<organism>
    <name type="scientific">Xanthomonas campestris pv. campestris (strain ATCC 33913 / DSM 3586 / NCPPB 528 / LMG 568 / P 25)</name>
    <dbReference type="NCBI Taxonomy" id="190485"/>
    <lineage>
        <taxon>Bacteria</taxon>
        <taxon>Pseudomonadati</taxon>
        <taxon>Pseudomonadota</taxon>
        <taxon>Gammaproteobacteria</taxon>
        <taxon>Lysobacterales</taxon>
        <taxon>Lysobacteraceae</taxon>
        <taxon>Xanthomonas</taxon>
    </lineage>
</organism>